<reference key="1">
    <citation type="journal article" date="2006" name="Proc. Natl. Acad. Sci. U.S.A.">
        <title>Comparative genomics of the lactic acid bacteria.</title>
        <authorList>
            <person name="Makarova K.S."/>
            <person name="Slesarev A."/>
            <person name="Wolf Y.I."/>
            <person name="Sorokin A."/>
            <person name="Mirkin B."/>
            <person name="Koonin E.V."/>
            <person name="Pavlov A."/>
            <person name="Pavlova N."/>
            <person name="Karamychev V."/>
            <person name="Polouchine N."/>
            <person name="Shakhova V."/>
            <person name="Grigoriev I."/>
            <person name="Lou Y."/>
            <person name="Rohksar D."/>
            <person name="Lucas S."/>
            <person name="Huang K."/>
            <person name="Goodstein D.M."/>
            <person name="Hawkins T."/>
            <person name="Plengvidhya V."/>
            <person name="Welker D."/>
            <person name="Hughes J."/>
            <person name="Goh Y."/>
            <person name="Benson A."/>
            <person name="Baldwin K."/>
            <person name="Lee J.-H."/>
            <person name="Diaz-Muniz I."/>
            <person name="Dosti B."/>
            <person name="Smeianov V."/>
            <person name="Wechter W."/>
            <person name="Barabote R."/>
            <person name="Lorca G."/>
            <person name="Altermann E."/>
            <person name="Barrangou R."/>
            <person name="Ganesan B."/>
            <person name="Xie Y."/>
            <person name="Rawsthorne H."/>
            <person name="Tamir D."/>
            <person name="Parker C."/>
            <person name="Breidt F."/>
            <person name="Broadbent J.R."/>
            <person name="Hutkins R."/>
            <person name="O'Sullivan D."/>
            <person name="Steele J."/>
            <person name="Unlu G."/>
            <person name="Saier M.H. Jr."/>
            <person name="Klaenhammer T."/>
            <person name="Richardson P."/>
            <person name="Kozyavkin S."/>
            <person name="Weimer B.C."/>
            <person name="Mills D.A."/>
        </authorList>
    </citation>
    <scope>NUCLEOTIDE SEQUENCE [LARGE SCALE GENOMIC DNA]</scope>
    <source>
        <strain>ATCC BAA-365 / Lb-18</strain>
    </source>
</reference>
<evidence type="ECO:0000255" key="1">
    <source>
        <dbReference type="HAMAP-Rule" id="MF_00518"/>
    </source>
</evidence>
<comment type="function">
    <text evidence="1">An aminoacyl-tRNA editing enzyme that deacylates mischarged D-aminoacyl-tRNAs. Also deacylates mischarged glycyl-tRNA(Ala), protecting cells against glycine mischarging by AlaRS. Acts via tRNA-based rather than protein-based catalysis; rejects L-amino acids rather than detecting D-amino acids in the active site. By recycling D-aminoacyl-tRNA to D-amino acids and free tRNA molecules, this enzyme counteracts the toxicity associated with the formation of D-aminoacyl-tRNA entities in vivo and helps enforce protein L-homochirality.</text>
</comment>
<comment type="catalytic activity">
    <reaction evidence="1">
        <text>glycyl-tRNA(Ala) + H2O = tRNA(Ala) + glycine + H(+)</text>
        <dbReference type="Rhea" id="RHEA:53744"/>
        <dbReference type="Rhea" id="RHEA-COMP:9657"/>
        <dbReference type="Rhea" id="RHEA-COMP:13640"/>
        <dbReference type="ChEBI" id="CHEBI:15377"/>
        <dbReference type="ChEBI" id="CHEBI:15378"/>
        <dbReference type="ChEBI" id="CHEBI:57305"/>
        <dbReference type="ChEBI" id="CHEBI:78442"/>
        <dbReference type="ChEBI" id="CHEBI:78522"/>
        <dbReference type="EC" id="3.1.1.96"/>
    </reaction>
</comment>
<comment type="catalytic activity">
    <reaction evidence="1">
        <text>a D-aminoacyl-tRNA + H2O = a tRNA + a D-alpha-amino acid + H(+)</text>
        <dbReference type="Rhea" id="RHEA:13953"/>
        <dbReference type="Rhea" id="RHEA-COMP:10123"/>
        <dbReference type="Rhea" id="RHEA-COMP:10124"/>
        <dbReference type="ChEBI" id="CHEBI:15377"/>
        <dbReference type="ChEBI" id="CHEBI:15378"/>
        <dbReference type="ChEBI" id="CHEBI:59871"/>
        <dbReference type="ChEBI" id="CHEBI:78442"/>
        <dbReference type="ChEBI" id="CHEBI:79333"/>
        <dbReference type="EC" id="3.1.1.96"/>
    </reaction>
</comment>
<comment type="subunit">
    <text evidence="1">Homodimer.</text>
</comment>
<comment type="subcellular location">
    <subcellularLocation>
        <location evidence="1">Cytoplasm</location>
    </subcellularLocation>
</comment>
<comment type="domain">
    <text evidence="1">A Gly-cisPro motif from one monomer fits into the active site of the other monomer to allow specific chiral rejection of L-amino acids.</text>
</comment>
<comment type="similarity">
    <text evidence="1">Belongs to the DTD family.</text>
</comment>
<gene>
    <name evidence="1" type="primary">dtd</name>
    <name type="ordered locus">LBUL_0811</name>
</gene>
<feature type="chain" id="PRO_1000050844" description="D-aminoacyl-tRNA deacylase">
    <location>
        <begin position="1"/>
        <end position="145"/>
    </location>
</feature>
<feature type="short sequence motif" description="Gly-cisPro motif, important for rejection of L-amino acids" evidence="1">
    <location>
        <begin position="137"/>
        <end position="138"/>
    </location>
</feature>
<organism>
    <name type="scientific">Lactobacillus delbrueckii subsp. bulgaricus (strain ATCC BAA-365 / Lb-18)</name>
    <dbReference type="NCBI Taxonomy" id="321956"/>
    <lineage>
        <taxon>Bacteria</taxon>
        <taxon>Bacillati</taxon>
        <taxon>Bacillota</taxon>
        <taxon>Bacilli</taxon>
        <taxon>Lactobacillales</taxon>
        <taxon>Lactobacillaceae</taxon>
        <taxon>Lactobacillus</taxon>
    </lineage>
</organism>
<dbReference type="EC" id="3.1.1.96" evidence="1"/>
<dbReference type="EMBL" id="CP000412">
    <property type="protein sequence ID" value="ABJ58417.1"/>
    <property type="molecule type" value="Genomic_DNA"/>
</dbReference>
<dbReference type="RefSeq" id="WP_011678187.1">
    <property type="nucleotide sequence ID" value="NC_008529.1"/>
</dbReference>
<dbReference type="SMR" id="Q04AV5"/>
<dbReference type="KEGG" id="lbu:LBUL_0811"/>
<dbReference type="HOGENOM" id="CLU_076901_1_0_9"/>
<dbReference type="BioCyc" id="LDEL321956:LBUL_RS03860-MONOMER"/>
<dbReference type="GO" id="GO:0005737">
    <property type="term" value="C:cytoplasm"/>
    <property type="evidence" value="ECO:0007669"/>
    <property type="project" value="UniProtKB-SubCell"/>
</dbReference>
<dbReference type="GO" id="GO:0051500">
    <property type="term" value="F:D-tyrosyl-tRNA(Tyr) deacylase activity"/>
    <property type="evidence" value="ECO:0007669"/>
    <property type="project" value="TreeGrafter"/>
</dbReference>
<dbReference type="GO" id="GO:0106026">
    <property type="term" value="F:Gly-tRNA(Ala) deacylase activity"/>
    <property type="evidence" value="ECO:0007669"/>
    <property type="project" value="UniProtKB-UniRule"/>
</dbReference>
<dbReference type="GO" id="GO:0043908">
    <property type="term" value="F:Ser(Gly)-tRNA(Ala) hydrolase activity"/>
    <property type="evidence" value="ECO:0007669"/>
    <property type="project" value="UniProtKB-UniRule"/>
</dbReference>
<dbReference type="GO" id="GO:0000049">
    <property type="term" value="F:tRNA binding"/>
    <property type="evidence" value="ECO:0007669"/>
    <property type="project" value="UniProtKB-UniRule"/>
</dbReference>
<dbReference type="GO" id="GO:0019478">
    <property type="term" value="P:D-amino acid catabolic process"/>
    <property type="evidence" value="ECO:0007669"/>
    <property type="project" value="UniProtKB-UniRule"/>
</dbReference>
<dbReference type="FunFam" id="3.50.80.10:FF:000001">
    <property type="entry name" value="D-aminoacyl-tRNA deacylase"/>
    <property type="match status" value="1"/>
</dbReference>
<dbReference type="Gene3D" id="3.50.80.10">
    <property type="entry name" value="D-tyrosyl-tRNA(Tyr) deacylase"/>
    <property type="match status" value="1"/>
</dbReference>
<dbReference type="HAMAP" id="MF_00518">
    <property type="entry name" value="Deacylase_Dtd"/>
    <property type="match status" value="1"/>
</dbReference>
<dbReference type="InterPro" id="IPR003732">
    <property type="entry name" value="Daa-tRNA_deacyls_DTD"/>
</dbReference>
<dbReference type="InterPro" id="IPR023509">
    <property type="entry name" value="DTD-like_sf"/>
</dbReference>
<dbReference type="NCBIfam" id="TIGR00256">
    <property type="entry name" value="D-aminoacyl-tRNA deacylase"/>
    <property type="match status" value="1"/>
</dbReference>
<dbReference type="PANTHER" id="PTHR10472:SF5">
    <property type="entry name" value="D-AMINOACYL-TRNA DEACYLASE 1"/>
    <property type="match status" value="1"/>
</dbReference>
<dbReference type="PANTHER" id="PTHR10472">
    <property type="entry name" value="D-TYROSYL-TRNA TYR DEACYLASE"/>
    <property type="match status" value="1"/>
</dbReference>
<dbReference type="Pfam" id="PF02580">
    <property type="entry name" value="Tyr_Deacylase"/>
    <property type="match status" value="1"/>
</dbReference>
<dbReference type="SUPFAM" id="SSF69500">
    <property type="entry name" value="DTD-like"/>
    <property type="match status" value="1"/>
</dbReference>
<name>DTD_LACDB</name>
<keyword id="KW-0963">Cytoplasm</keyword>
<keyword id="KW-0378">Hydrolase</keyword>
<keyword id="KW-0694">RNA-binding</keyword>
<keyword id="KW-0820">tRNA-binding</keyword>
<accession>Q04AV5</accession>
<proteinExistence type="inferred from homology"/>
<sequence>MRVVIQRVNHAAVRIDGETVGQIPKGLLLLVGLAEGDGEEQVVKAADKIAKMRIFEDEAGKTNLGIKDVGGQILSVSQFTLLADTKRGNRPSFVHAMRPPKSSQLWEEFNQELVKRGLTVETGEFGADMKVELENDGPFTIVLDL</sequence>
<protein>
    <recommendedName>
        <fullName evidence="1">D-aminoacyl-tRNA deacylase</fullName>
        <shortName evidence="1">DTD</shortName>
        <ecNumber evidence="1">3.1.1.96</ecNumber>
    </recommendedName>
    <alternativeName>
        <fullName evidence="1">Gly-tRNA(Ala) deacylase</fullName>
    </alternativeName>
</protein>